<gene>
    <name evidence="1" type="primary">rocD2</name>
    <name type="ordered locus">SAR0919</name>
</gene>
<organism>
    <name type="scientific">Staphylococcus aureus (strain MRSA252)</name>
    <dbReference type="NCBI Taxonomy" id="282458"/>
    <lineage>
        <taxon>Bacteria</taxon>
        <taxon>Bacillati</taxon>
        <taxon>Bacillota</taxon>
        <taxon>Bacilli</taxon>
        <taxon>Bacillales</taxon>
        <taxon>Staphylococcaceae</taxon>
        <taxon>Staphylococcus</taxon>
    </lineage>
</organism>
<sequence>MTKSEKIIELTNHYGAHNYLPLPIVISEAEGVWVKDPEGNKYMDMLSAYSAVNQGHRHPKIIQALKDQADKVTLVSRAFHSDNLGEWYEKICKLAGKDKALPMNTGAEAVETALKAARRWAYDVKGIEPNKAEIIAFNGNFHGRTMAPVSLSSEAEYQRGYGPLLDGFRKVDFGDVDALKAAINKNTAAVLVEPIQGEAGINIPPEGYLKAIRELCDEHNVLFIADEIQAGLGRSGKLFARDWDNVKPDVYILGKALGGGVFPISVVLADKEVLDVFTPGSHGSTFGGNPLACAASIAALDVIVDEDLPGRSLELGDYFKEQLKQIDHPSIKEVRGRGLFIGVELNESARPYCEALKEEGLLCKETHDTVIRFAPPLIITKEELDLALEKIRHVFQ</sequence>
<dbReference type="EC" id="2.6.1.13" evidence="1"/>
<dbReference type="EMBL" id="BX571856">
    <property type="protein sequence ID" value="CAG39925.1"/>
    <property type="molecule type" value="Genomic_DNA"/>
</dbReference>
<dbReference type="RefSeq" id="WP_000167321.1">
    <property type="nucleotide sequence ID" value="NC_002952.2"/>
</dbReference>
<dbReference type="SMR" id="Q6GID1"/>
<dbReference type="KEGG" id="sar:SAR0919"/>
<dbReference type="HOGENOM" id="CLU_016922_10_1_9"/>
<dbReference type="UniPathway" id="UPA00098">
    <property type="reaction ID" value="UER00358"/>
</dbReference>
<dbReference type="Proteomes" id="UP000000596">
    <property type="component" value="Chromosome"/>
</dbReference>
<dbReference type="GO" id="GO:0005737">
    <property type="term" value="C:cytoplasm"/>
    <property type="evidence" value="ECO:0007669"/>
    <property type="project" value="UniProtKB-SubCell"/>
</dbReference>
<dbReference type="GO" id="GO:0042802">
    <property type="term" value="F:identical protein binding"/>
    <property type="evidence" value="ECO:0007669"/>
    <property type="project" value="TreeGrafter"/>
</dbReference>
<dbReference type="GO" id="GO:0004587">
    <property type="term" value="F:ornithine aminotransferase activity"/>
    <property type="evidence" value="ECO:0007669"/>
    <property type="project" value="UniProtKB-UniRule"/>
</dbReference>
<dbReference type="GO" id="GO:0030170">
    <property type="term" value="F:pyridoxal phosphate binding"/>
    <property type="evidence" value="ECO:0007669"/>
    <property type="project" value="UniProtKB-UniRule"/>
</dbReference>
<dbReference type="GO" id="GO:0055129">
    <property type="term" value="P:L-proline biosynthetic process"/>
    <property type="evidence" value="ECO:0007669"/>
    <property type="project" value="UniProtKB-UniRule"/>
</dbReference>
<dbReference type="CDD" id="cd00610">
    <property type="entry name" value="OAT_like"/>
    <property type="match status" value="1"/>
</dbReference>
<dbReference type="FunFam" id="3.40.640.10:FF:000011">
    <property type="entry name" value="Ornithine aminotransferase"/>
    <property type="match status" value="1"/>
</dbReference>
<dbReference type="Gene3D" id="3.90.1150.10">
    <property type="entry name" value="Aspartate Aminotransferase, domain 1"/>
    <property type="match status" value="1"/>
</dbReference>
<dbReference type="Gene3D" id="3.40.640.10">
    <property type="entry name" value="Type I PLP-dependent aspartate aminotransferase-like (Major domain)"/>
    <property type="match status" value="1"/>
</dbReference>
<dbReference type="HAMAP" id="MF_01689">
    <property type="entry name" value="Ornith_aminotrans_3"/>
    <property type="match status" value="1"/>
</dbReference>
<dbReference type="InterPro" id="IPR005814">
    <property type="entry name" value="Aminotrans_3"/>
</dbReference>
<dbReference type="InterPro" id="IPR049704">
    <property type="entry name" value="Aminotrans_3_PPA_site"/>
</dbReference>
<dbReference type="InterPro" id="IPR050103">
    <property type="entry name" value="Class-III_PLP-dep_AT"/>
</dbReference>
<dbReference type="InterPro" id="IPR010164">
    <property type="entry name" value="Orn_aminotrans"/>
</dbReference>
<dbReference type="InterPro" id="IPR034757">
    <property type="entry name" value="Ornith_aminotrans_bact"/>
</dbReference>
<dbReference type="InterPro" id="IPR015424">
    <property type="entry name" value="PyrdxlP-dep_Trfase"/>
</dbReference>
<dbReference type="InterPro" id="IPR015421">
    <property type="entry name" value="PyrdxlP-dep_Trfase_major"/>
</dbReference>
<dbReference type="InterPro" id="IPR015422">
    <property type="entry name" value="PyrdxlP-dep_Trfase_small"/>
</dbReference>
<dbReference type="NCBIfam" id="TIGR01885">
    <property type="entry name" value="Orn_aminotrans"/>
    <property type="match status" value="1"/>
</dbReference>
<dbReference type="NCBIfam" id="NF002325">
    <property type="entry name" value="PRK01278.1"/>
    <property type="match status" value="1"/>
</dbReference>
<dbReference type="NCBIfam" id="NF003145">
    <property type="entry name" value="PRK04073.1"/>
    <property type="match status" value="1"/>
</dbReference>
<dbReference type="PANTHER" id="PTHR11986">
    <property type="entry name" value="AMINOTRANSFERASE CLASS III"/>
    <property type="match status" value="1"/>
</dbReference>
<dbReference type="PANTHER" id="PTHR11986:SF18">
    <property type="entry name" value="ORNITHINE AMINOTRANSFERASE, MITOCHONDRIAL"/>
    <property type="match status" value="1"/>
</dbReference>
<dbReference type="Pfam" id="PF00202">
    <property type="entry name" value="Aminotran_3"/>
    <property type="match status" value="1"/>
</dbReference>
<dbReference type="PIRSF" id="PIRSF000521">
    <property type="entry name" value="Transaminase_4ab_Lys_Orn"/>
    <property type="match status" value="1"/>
</dbReference>
<dbReference type="SUPFAM" id="SSF53383">
    <property type="entry name" value="PLP-dependent transferases"/>
    <property type="match status" value="1"/>
</dbReference>
<dbReference type="PROSITE" id="PS00600">
    <property type="entry name" value="AA_TRANSFER_CLASS_3"/>
    <property type="match status" value="1"/>
</dbReference>
<proteinExistence type="inferred from homology"/>
<evidence type="ECO:0000255" key="1">
    <source>
        <dbReference type="HAMAP-Rule" id="MF_01689"/>
    </source>
</evidence>
<protein>
    <recommendedName>
        <fullName evidence="1">Ornithine aminotransferase 2</fullName>
        <shortName evidence="1">OAT 2</shortName>
        <ecNumber evidence="1">2.6.1.13</ecNumber>
    </recommendedName>
    <alternativeName>
        <fullName evidence="1">Ornithine--oxo-acid aminotransferase 2</fullName>
    </alternativeName>
</protein>
<reference key="1">
    <citation type="journal article" date="2004" name="Proc. Natl. Acad. Sci. U.S.A.">
        <title>Complete genomes of two clinical Staphylococcus aureus strains: evidence for the rapid evolution of virulence and drug resistance.</title>
        <authorList>
            <person name="Holden M.T.G."/>
            <person name="Feil E.J."/>
            <person name="Lindsay J.A."/>
            <person name="Peacock S.J."/>
            <person name="Day N.P.J."/>
            <person name="Enright M.C."/>
            <person name="Foster T.J."/>
            <person name="Moore C.E."/>
            <person name="Hurst L."/>
            <person name="Atkin R."/>
            <person name="Barron A."/>
            <person name="Bason N."/>
            <person name="Bentley S.D."/>
            <person name="Chillingworth C."/>
            <person name="Chillingworth T."/>
            <person name="Churcher C."/>
            <person name="Clark L."/>
            <person name="Corton C."/>
            <person name="Cronin A."/>
            <person name="Doggett J."/>
            <person name="Dowd L."/>
            <person name="Feltwell T."/>
            <person name="Hance Z."/>
            <person name="Harris B."/>
            <person name="Hauser H."/>
            <person name="Holroyd S."/>
            <person name="Jagels K."/>
            <person name="James K.D."/>
            <person name="Lennard N."/>
            <person name="Line A."/>
            <person name="Mayes R."/>
            <person name="Moule S."/>
            <person name="Mungall K."/>
            <person name="Ormond D."/>
            <person name="Quail M.A."/>
            <person name="Rabbinowitsch E."/>
            <person name="Rutherford K.M."/>
            <person name="Sanders M."/>
            <person name="Sharp S."/>
            <person name="Simmonds M."/>
            <person name="Stevens K."/>
            <person name="Whitehead S."/>
            <person name="Barrell B.G."/>
            <person name="Spratt B.G."/>
            <person name="Parkhill J."/>
        </authorList>
    </citation>
    <scope>NUCLEOTIDE SEQUENCE [LARGE SCALE GENOMIC DNA]</scope>
    <source>
        <strain>MRSA252</strain>
    </source>
</reference>
<feature type="chain" id="PRO_0000112787" description="Ornithine aminotransferase 2">
    <location>
        <begin position="1"/>
        <end position="396"/>
    </location>
</feature>
<feature type="modified residue" description="N6-(pyridoxal phosphate)lysine" evidence="1">
    <location>
        <position position="255"/>
    </location>
</feature>
<comment type="function">
    <text evidence="1">Catalyzes the interconversion of ornithine to glutamate semialdehyde.</text>
</comment>
<comment type="catalytic activity">
    <reaction evidence="1">
        <text>a 2-oxocarboxylate + L-ornithine = L-glutamate 5-semialdehyde + an L-alpha-amino acid</text>
        <dbReference type="Rhea" id="RHEA:13877"/>
        <dbReference type="ChEBI" id="CHEBI:35179"/>
        <dbReference type="ChEBI" id="CHEBI:46911"/>
        <dbReference type="ChEBI" id="CHEBI:58066"/>
        <dbReference type="ChEBI" id="CHEBI:59869"/>
        <dbReference type="EC" id="2.6.1.13"/>
    </reaction>
</comment>
<comment type="cofactor">
    <cofactor evidence="1">
        <name>pyridoxal 5'-phosphate</name>
        <dbReference type="ChEBI" id="CHEBI:597326"/>
    </cofactor>
</comment>
<comment type="pathway">
    <text evidence="1">Amino-acid biosynthesis; L-proline biosynthesis; L-glutamate 5-semialdehyde from L-ornithine: step 1/1.</text>
</comment>
<comment type="subcellular location">
    <subcellularLocation>
        <location evidence="1">Cytoplasm</location>
    </subcellularLocation>
</comment>
<comment type="similarity">
    <text evidence="1">Belongs to the class-III pyridoxal-phosphate-dependent aminotransferase family. OAT subfamily.</text>
</comment>
<name>OAT2_STAAR</name>
<keyword id="KW-0028">Amino-acid biosynthesis</keyword>
<keyword id="KW-0032">Aminotransferase</keyword>
<keyword id="KW-0963">Cytoplasm</keyword>
<keyword id="KW-0641">Proline biosynthesis</keyword>
<keyword id="KW-0663">Pyridoxal phosphate</keyword>
<keyword id="KW-0808">Transferase</keyword>
<accession>Q6GID1</accession>